<feature type="chain" id="PRO_0000230619" description="Large ribosomal subunit protein uL1">
    <location>
        <begin position="1"/>
        <end position="231"/>
    </location>
</feature>
<name>RL1_NITOC</name>
<organism>
    <name type="scientific">Nitrosococcus oceani (strain ATCC 19707 / BCRC 17464 / JCM 30415 / NCIMB 11848 / C-107)</name>
    <dbReference type="NCBI Taxonomy" id="323261"/>
    <lineage>
        <taxon>Bacteria</taxon>
        <taxon>Pseudomonadati</taxon>
        <taxon>Pseudomonadota</taxon>
        <taxon>Gammaproteobacteria</taxon>
        <taxon>Chromatiales</taxon>
        <taxon>Chromatiaceae</taxon>
        <taxon>Nitrosococcus</taxon>
    </lineage>
</organism>
<comment type="function">
    <text evidence="1">Binds directly to 23S rRNA. The L1 stalk is quite mobile in the ribosome, and is involved in E site tRNA release.</text>
</comment>
<comment type="function">
    <text evidence="1">Protein L1 is also a translational repressor protein, it controls the translation of the L11 operon by binding to its mRNA.</text>
</comment>
<comment type="subunit">
    <text evidence="1">Part of the 50S ribosomal subunit.</text>
</comment>
<comment type="similarity">
    <text evidence="1">Belongs to the universal ribosomal protein uL1 family.</text>
</comment>
<evidence type="ECO:0000255" key="1">
    <source>
        <dbReference type="HAMAP-Rule" id="MF_01318"/>
    </source>
</evidence>
<evidence type="ECO:0000305" key="2"/>
<dbReference type="EMBL" id="CP000127">
    <property type="protein sequence ID" value="ABA58792.1"/>
    <property type="molecule type" value="Genomic_DNA"/>
</dbReference>
<dbReference type="RefSeq" id="WP_002808852.1">
    <property type="nucleotide sequence ID" value="NC_007484.1"/>
</dbReference>
<dbReference type="SMR" id="Q3J8Q4"/>
<dbReference type="FunCoup" id="Q3J8Q4">
    <property type="interactions" value="672"/>
</dbReference>
<dbReference type="STRING" id="323261.Noc_2334"/>
<dbReference type="KEGG" id="noc:Noc_2334"/>
<dbReference type="eggNOG" id="COG0081">
    <property type="taxonomic scope" value="Bacteria"/>
</dbReference>
<dbReference type="HOGENOM" id="CLU_062853_0_0_6"/>
<dbReference type="InParanoid" id="Q3J8Q4"/>
<dbReference type="Proteomes" id="UP000006838">
    <property type="component" value="Chromosome"/>
</dbReference>
<dbReference type="GO" id="GO:0022625">
    <property type="term" value="C:cytosolic large ribosomal subunit"/>
    <property type="evidence" value="ECO:0007669"/>
    <property type="project" value="TreeGrafter"/>
</dbReference>
<dbReference type="GO" id="GO:0019843">
    <property type="term" value="F:rRNA binding"/>
    <property type="evidence" value="ECO:0007669"/>
    <property type="project" value="UniProtKB-UniRule"/>
</dbReference>
<dbReference type="GO" id="GO:0003735">
    <property type="term" value="F:structural constituent of ribosome"/>
    <property type="evidence" value="ECO:0007669"/>
    <property type="project" value="InterPro"/>
</dbReference>
<dbReference type="GO" id="GO:0000049">
    <property type="term" value="F:tRNA binding"/>
    <property type="evidence" value="ECO:0007669"/>
    <property type="project" value="UniProtKB-KW"/>
</dbReference>
<dbReference type="GO" id="GO:0006417">
    <property type="term" value="P:regulation of translation"/>
    <property type="evidence" value="ECO:0007669"/>
    <property type="project" value="UniProtKB-KW"/>
</dbReference>
<dbReference type="GO" id="GO:0006412">
    <property type="term" value="P:translation"/>
    <property type="evidence" value="ECO:0007669"/>
    <property type="project" value="UniProtKB-UniRule"/>
</dbReference>
<dbReference type="CDD" id="cd00403">
    <property type="entry name" value="Ribosomal_L1"/>
    <property type="match status" value="1"/>
</dbReference>
<dbReference type="FunFam" id="3.40.50.790:FF:000001">
    <property type="entry name" value="50S ribosomal protein L1"/>
    <property type="match status" value="1"/>
</dbReference>
<dbReference type="Gene3D" id="3.30.190.20">
    <property type="match status" value="1"/>
</dbReference>
<dbReference type="Gene3D" id="3.40.50.790">
    <property type="match status" value="1"/>
</dbReference>
<dbReference type="HAMAP" id="MF_01318_B">
    <property type="entry name" value="Ribosomal_uL1_B"/>
    <property type="match status" value="1"/>
</dbReference>
<dbReference type="InterPro" id="IPR005878">
    <property type="entry name" value="Ribosom_uL1_bac-type"/>
</dbReference>
<dbReference type="InterPro" id="IPR002143">
    <property type="entry name" value="Ribosomal_uL1"/>
</dbReference>
<dbReference type="InterPro" id="IPR023674">
    <property type="entry name" value="Ribosomal_uL1-like"/>
</dbReference>
<dbReference type="InterPro" id="IPR028364">
    <property type="entry name" value="Ribosomal_uL1/biogenesis"/>
</dbReference>
<dbReference type="InterPro" id="IPR016095">
    <property type="entry name" value="Ribosomal_uL1_3-a/b-sand"/>
</dbReference>
<dbReference type="InterPro" id="IPR023673">
    <property type="entry name" value="Ribosomal_uL1_CS"/>
</dbReference>
<dbReference type="NCBIfam" id="TIGR01169">
    <property type="entry name" value="rplA_bact"/>
    <property type="match status" value="1"/>
</dbReference>
<dbReference type="PANTHER" id="PTHR36427">
    <property type="entry name" value="54S RIBOSOMAL PROTEIN L1, MITOCHONDRIAL"/>
    <property type="match status" value="1"/>
</dbReference>
<dbReference type="PANTHER" id="PTHR36427:SF3">
    <property type="entry name" value="LARGE RIBOSOMAL SUBUNIT PROTEIN UL1M"/>
    <property type="match status" value="1"/>
</dbReference>
<dbReference type="Pfam" id="PF00687">
    <property type="entry name" value="Ribosomal_L1"/>
    <property type="match status" value="1"/>
</dbReference>
<dbReference type="PIRSF" id="PIRSF002155">
    <property type="entry name" value="Ribosomal_L1"/>
    <property type="match status" value="1"/>
</dbReference>
<dbReference type="SUPFAM" id="SSF56808">
    <property type="entry name" value="Ribosomal protein L1"/>
    <property type="match status" value="1"/>
</dbReference>
<dbReference type="PROSITE" id="PS01199">
    <property type="entry name" value="RIBOSOMAL_L1"/>
    <property type="match status" value="1"/>
</dbReference>
<keyword id="KW-1185">Reference proteome</keyword>
<keyword id="KW-0678">Repressor</keyword>
<keyword id="KW-0687">Ribonucleoprotein</keyword>
<keyword id="KW-0689">Ribosomal protein</keyword>
<keyword id="KW-0694">RNA-binding</keyword>
<keyword id="KW-0699">rRNA-binding</keyword>
<keyword id="KW-0810">Translation regulation</keyword>
<keyword id="KW-0820">tRNA-binding</keyword>
<sequence length="231" mass="24217">MAKLGKRLVGIREKLEPGKLYPVEEALNLLKEVAKVKFEESVDVAVNLGVDPRKSDQVVRGSTVLPNGLGKTVRVGVFTQGVNAEAAKNAGADVVGLEDLAETVKSGQIDFDVIIASPDAMRVVGQLGPILGPRGLMPNPKVGTVTTDVAGAVTKAKAGQVRYRTDKAGIIHCSIGKTSFEVDALKQNLRALVEDLGKLKPASAKGIYLKKLTLSTTMGPGIAVDQASLPV</sequence>
<gene>
    <name evidence="1" type="primary">rplA</name>
    <name type="ordered locus">Noc_2334</name>
</gene>
<accession>Q3J8Q4</accession>
<proteinExistence type="inferred from homology"/>
<reference key="1">
    <citation type="journal article" date="2006" name="Appl. Environ. Microbiol.">
        <title>Complete genome sequence of the marine, chemolithoautotrophic, ammonia-oxidizing bacterium Nitrosococcus oceani ATCC 19707.</title>
        <authorList>
            <person name="Klotz M.G."/>
            <person name="Arp D.J."/>
            <person name="Chain P.S.G."/>
            <person name="El-Sheikh A.F."/>
            <person name="Hauser L.J."/>
            <person name="Hommes N.G."/>
            <person name="Larimer F.W."/>
            <person name="Malfatti S.A."/>
            <person name="Norton J.M."/>
            <person name="Poret-Peterson A.T."/>
            <person name="Vergez L.M."/>
            <person name="Ward B.B."/>
        </authorList>
    </citation>
    <scope>NUCLEOTIDE SEQUENCE [LARGE SCALE GENOMIC DNA]</scope>
    <source>
        <strain>ATCC 19707 / BCRC 17464 / JCM 30415 / NCIMB 11848 / C-107</strain>
    </source>
</reference>
<protein>
    <recommendedName>
        <fullName evidence="1">Large ribosomal subunit protein uL1</fullName>
    </recommendedName>
    <alternativeName>
        <fullName evidence="2">50S ribosomal protein L1</fullName>
    </alternativeName>
</protein>